<sequence>MVSQRLEELAAEFGLVERALGDPAMLADPREYARLTRRHRELTPIVTLYREHAVLSSDLEGARELLADPDMRELAQGEIESLSARLAQIEAELEVLLLPTDPDDAKNVILELRAGAGGAEAALFAVDLLRMYTRYAEGAGLKLNVLDASESDLGGASKVVAEVTGEFAFRAFKWERGVHRVQRVPATESQGRIHTSTVTVAVLPEAEQGEVSVDPSEVRIDVFRSQGAGGQGVNTTDSAVRAVYRPGTPDEIVVVCQDSRSQIKNREKALVVLASRLAERERAAREERERETRAAQVGTGERSEKIRTYNYPQNRVTDHRLEGDAKNFALDSVMAGGLAPIVAALSRDERERQLLELQGAEGERGTYGAA</sequence>
<protein>
    <recommendedName>
        <fullName evidence="1">Peptide chain release factor 1</fullName>
        <shortName evidence="1">RF-1</shortName>
    </recommendedName>
</protein>
<dbReference type="EMBL" id="CP000359">
    <property type="protein sequence ID" value="ABF44911.1"/>
    <property type="molecule type" value="Genomic_DNA"/>
</dbReference>
<dbReference type="RefSeq" id="WP_011529753.1">
    <property type="nucleotide sequence ID" value="NC_008025.1"/>
</dbReference>
<dbReference type="SMR" id="Q1J0S3"/>
<dbReference type="STRING" id="319795.Dgeo_0609"/>
<dbReference type="KEGG" id="dge:Dgeo_0609"/>
<dbReference type="eggNOG" id="COG0216">
    <property type="taxonomic scope" value="Bacteria"/>
</dbReference>
<dbReference type="HOGENOM" id="CLU_036856_0_1_0"/>
<dbReference type="Proteomes" id="UP000002431">
    <property type="component" value="Chromosome"/>
</dbReference>
<dbReference type="GO" id="GO:0005737">
    <property type="term" value="C:cytoplasm"/>
    <property type="evidence" value="ECO:0007669"/>
    <property type="project" value="UniProtKB-SubCell"/>
</dbReference>
<dbReference type="GO" id="GO:0016149">
    <property type="term" value="F:translation release factor activity, codon specific"/>
    <property type="evidence" value="ECO:0007669"/>
    <property type="project" value="UniProtKB-UniRule"/>
</dbReference>
<dbReference type="FunFam" id="3.30.160.20:FF:000004">
    <property type="entry name" value="Peptide chain release factor 1"/>
    <property type="match status" value="1"/>
</dbReference>
<dbReference type="FunFam" id="3.30.70.1660:FF:000002">
    <property type="entry name" value="Peptide chain release factor 1"/>
    <property type="match status" value="1"/>
</dbReference>
<dbReference type="Gene3D" id="3.30.160.20">
    <property type="match status" value="1"/>
</dbReference>
<dbReference type="Gene3D" id="3.30.70.1660">
    <property type="match status" value="2"/>
</dbReference>
<dbReference type="Gene3D" id="6.10.140.1950">
    <property type="match status" value="1"/>
</dbReference>
<dbReference type="HAMAP" id="MF_00093">
    <property type="entry name" value="Rel_fac_1"/>
    <property type="match status" value="1"/>
</dbReference>
<dbReference type="InterPro" id="IPR005139">
    <property type="entry name" value="PCRF"/>
</dbReference>
<dbReference type="InterPro" id="IPR000352">
    <property type="entry name" value="Pep_chain_release_fac_I"/>
</dbReference>
<dbReference type="InterPro" id="IPR045853">
    <property type="entry name" value="Pep_chain_release_fac_I_sf"/>
</dbReference>
<dbReference type="InterPro" id="IPR050057">
    <property type="entry name" value="Prokaryotic/Mito_RF"/>
</dbReference>
<dbReference type="InterPro" id="IPR004373">
    <property type="entry name" value="RF-1"/>
</dbReference>
<dbReference type="NCBIfam" id="TIGR00019">
    <property type="entry name" value="prfA"/>
    <property type="match status" value="1"/>
</dbReference>
<dbReference type="NCBIfam" id="NF001859">
    <property type="entry name" value="PRK00591.1"/>
    <property type="match status" value="1"/>
</dbReference>
<dbReference type="PANTHER" id="PTHR43804">
    <property type="entry name" value="LD18447P"/>
    <property type="match status" value="1"/>
</dbReference>
<dbReference type="PANTHER" id="PTHR43804:SF7">
    <property type="entry name" value="LD18447P"/>
    <property type="match status" value="1"/>
</dbReference>
<dbReference type="Pfam" id="PF03462">
    <property type="entry name" value="PCRF"/>
    <property type="match status" value="1"/>
</dbReference>
<dbReference type="Pfam" id="PF00472">
    <property type="entry name" value="RF-1"/>
    <property type="match status" value="1"/>
</dbReference>
<dbReference type="SMART" id="SM00937">
    <property type="entry name" value="PCRF"/>
    <property type="match status" value="1"/>
</dbReference>
<dbReference type="SUPFAM" id="SSF75620">
    <property type="entry name" value="Release factor"/>
    <property type="match status" value="1"/>
</dbReference>
<dbReference type="PROSITE" id="PS00745">
    <property type="entry name" value="RF_PROK_I"/>
    <property type="match status" value="1"/>
</dbReference>
<comment type="function">
    <text evidence="1">Peptide chain release factor 1 directs the termination of translation in response to the peptide chain termination codons UAG and UAA.</text>
</comment>
<comment type="subcellular location">
    <subcellularLocation>
        <location evidence="1">Cytoplasm</location>
    </subcellularLocation>
</comment>
<comment type="PTM">
    <text evidence="1">Methylated by PrmC. Methylation increases the termination efficiency of RF1.</text>
</comment>
<comment type="similarity">
    <text evidence="1">Belongs to the prokaryotic/mitochondrial release factor family.</text>
</comment>
<proteinExistence type="inferred from homology"/>
<gene>
    <name evidence="1" type="primary">prfA</name>
    <name type="ordered locus">Dgeo_0609</name>
</gene>
<keyword id="KW-0963">Cytoplasm</keyword>
<keyword id="KW-0488">Methylation</keyword>
<keyword id="KW-0648">Protein biosynthesis</keyword>
<evidence type="ECO:0000255" key="1">
    <source>
        <dbReference type="HAMAP-Rule" id="MF_00093"/>
    </source>
</evidence>
<evidence type="ECO:0000256" key="2">
    <source>
        <dbReference type="SAM" id="MobiDB-lite"/>
    </source>
</evidence>
<feature type="chain" id="PRO_0000263266" description="Peptide chain release factor 1">
    <location>
        <begin position="1"/>
        <end position="370"/>
    </location>
</feature>
<feature type="region of interest" description="Disordered" evidence="2">
    <location>
        <begin position="284"/>
        <end position="303"/>
    </location>
</feature>
<feature type="compositionally biased region" description="Basic and acidic residues" evidence="2">
    <location>
        <begin position="284"/>
        <end position="293"/>
    </location>
</feature>
<feature type="modified residue" description="N5-methylglutamine" evidence="1">
    <location>
        <position position="231"/>
    </location>
</feature>
<organism>
    <name type="scientific">Deinococcus geothermalis (strain DSM 11300 / CIP 105573 / AG-3a)</name>
    <dbReference type="NCBI Taxonomy" id="319795"/>
    <lineage>
        <taxon>Bacteria</taxon>
        <taxon>Thermotogati</taxon>
        <taxon>Deinococcota</taxon>
        <taxon>Deinococci</taxon>
        <taxon>Deinococcales</taxon>
        <taxon>Deinococcaceae</taxon>
        <taxon>Deinococcus</taxon>
    </lineage>
</organism>
<reference key="1">
    <citation type="submission" date="2006-04" db="EMBL/GenBank/DDBJ databases">
        <title>Complete sequence of chromosome of Deinococcus geothermalis DSM 11300.</title>
        <authorList>
            <person name="Copeland A."/>
            <person name="Lucas S."/>
            <person name="Lapidus A."/>
            <person name="Barry K."/>
            <person name="Detter J.C."/>
            <person name="Glavina del Rio T."/>
            <person name="Hammon N."/>
            <person name="Israni S."/>
            <person name="Dalin E."/>
            <person name="Tice H."/>
            <person name="Pitluck S."/>
            <person name="Brettin T."/>
            <person name="Bruce D."/>
            <person name="Han C."/>
            <person name="Tapia R."/>
            <person name="Saunders E."/>
            <person name="Gilna P."/>
            <person name="Schmutz J."/>
            <person name="Larimer F."/>
            <person name="Land M."/>
            <person name="Hauser L."/>
            <person name="Kyrpides N."/>
            <person name="Kim E."/>
            <person name="Daly M.J."/>
            <person name="Fredrickson J.K."/>
            <person name="Makarova K.S."/>
            <person name="Gaidamakova E.K."/>
            <person name="Zhai M."/>
            <person name="Richardson P."/>
        </authorList>
    </citation>
    <scope>NUCLEOTIDE SEQUENCE [LARGE SCALE GENOMIC DNA]</scope>
    <source>
        <strain>DSM 11300 / CIP 105573 / AG-3a</strain>
    </source>
</reference>
<accession>Q1J0S3</accession>
<name>RF1_DEIGD</name>